<protein>
    <recommendedName>
        <fullName evidence="1">2-dehydro-3-deoxyphosphooctonate aldolase</fullName>
        <ecNumber evidence="1">2.5.1.55</ecNumber>
    </recommendedName>
    <alternativeName>
        <fullName evidence="1">3-deoxy-D-manno-octulosonic acid 8-phosphate synthase</fullName>
    </alternativeName>
    <alternativeName>
        <fullName evidence="1">KDO-8-phosphate synthase</fullName>
        <shortName evidence="1">KDO 8-P synthase</shortName>
        <shortName evidence="1">KDOPS</shortName>
    </alternativeName>
    <alternativeName>
        <fullName evidence="1">Phospho-2-dehydro-3-deoxyoctonate aldolase</fullName>
    </alternativeName>
</protein>
<dbReference type="EC" id="2.5.1.55" evidence="1"/>
<dbReference type="EMBL" id="CP001600">
    <property type="protein sequence ID" value="ACR68753.1"/>
    <property type="molecule type" value="Genomic_DNA"/>
</dbReference>
<dbReference type="RefSeq" id="WP_015870911.1">
    <property type="nucleotide sequence ID" value="NZ_CP169062.1"/>
</dbReference>
<dbReference type="SMR" id="C5B817"/>
<dbReference type="STRING" id="67780.B6E78_01030"/>
<dbReference type="GeneID" id="69538545"/>
<dbReference type="KEGG" id="eic:NT01EI_1567"/>
<dbReference type="PATRIC" id="fig|634503.3.peg.1401"/>
<dbReference type="HOGENOM" id="CLU_036666_0_0_6"/>
<dbReference type="OrthoDB" id="9776934at2"/>
<dbReference type="UniPathway" id="UPA00030"/>
<dbReference type="UniPathway" id="UPA00357">
    <property type="reaction ID" value="UER00474"/>
</dbReference>
<dbReference type="Proteomes" id="UP000001485">
    <property type="component" value="Chromosome"/>
</dbReference>
<dbReference type="GO" id="GO:0005737">
    <property type="term" value="C:cytoplasm"/>
    <property type="evidence" value="ECO:0007669"/>
    <property type="project" value="UniProtKB-SubCell"/>
</dbReference>
<dbReference type="GO" id="GO:0008676">
    <property type="term" value="F:3-deoxy-8-phosphooctulonate synthase activity"/>
    <property type="evidence" value="ECO:0007669"/>
    <property type="project" value="UniProtKB-UniRule"/>
</dbReference>
<dbReference type="GO" id="GO:0019294">
    <property type="term" value="P:keto-3-deoxy-D-manno-octulosonic acid biosynthetic process"/>
    <property type="evidence" value="ECO:0007669"/>
    <property type="project" value="UniProtKB-UniRule"/>
</dbReference>
<dbReference type="FunFam" id="3.20.20.70:FF:000058">
    <property type="entry name" value="2-dehydro-3-deoxyphosphooctonate aldolase"/>
    <property type="match status" value="1"/>
</dbReference>
<dbReference type="Gene3D" id="3.20.20.70">
    <property type="entry name" value="Aldolase class I"/>
    <property type="match status" value="1"/>
</dbReference>
<dbReference type="HAMAP" id="MF_00056">
    <property type="entry name" value="KDO8P_synth"/>
    <property type="match status" value="1"/>
</dbReference>
<dbReference type="InterPro" id="IPR013785">
    <property type="entry name" value="Aldolase_TIM"/>
</dbReference>
<dbReference type="InterPro" id="IPR006218">
    <property type="entry name" value="DAHP1/KDSA"/>
</dbReference>
<dbReference type="InterPro" id="IPR006269">
    <property type="entry name" value="KDO8P_synthase"/>
</dbReference>
<dbReference type="NCBIfam" id="TIGR01362">
    <property type="entry name" value="KDO8P_synth"/>
    <property type="match status" value="1"/>
</dbReference>
<dbReference type="NCBIfam" id="NF003543">
    <property type="entry name" value="PRK05198.1"/>
    <property type="match status" value="1"/>
</dbReference>
<dbReference type="NCBIfam" id="NF009109">
    <property type="entry name" value="PRK12457.1"/>
    <property type="match status" value="1"/>
</dbReference>
<dbReference type="PANTHER" id="PTHR21057">
    <property type="entry name" value="PHOSPHO-2-DEHYDRO-3-DEOXYHEPTONATE ALDOLASE"/>
    <property type="match status" value="1"/>
</dbReference>
<dbReference type="Pfam" id="PF00793">
    <property type="entry name" value="DAHP_synth_1"/>
    <property type="match status" value="1"/>
</dbReference>
<dbReference type="SUPFAM" id="SSF51569">
    <property type="entry name" value="Aldolase"/>
    <property type="match status" value="1"/>
</dbReference>
<accession>C5B817</accession>
<name>KDSA_EDWI9</name>
<proteinExistence type="inferred from homology"/>
<feature type="chain" id="PRO_1000202333" description="2-dehydro-3-deoxyphosphooctonate aldolase">
    <location>
        <begin position="1"/>
        <end position="284"/>
    </location>
</feature>
<organism>
    <name type="scientific">Edwardsiella ictaluri (strain 93-146)</name>
    <dbReference type="NCBI Taxonomy" id="634503"/>
    <lineage>
        <taxon>Bacteria</taxon>
        <taxon>Pseudomonadati</taxon>
        <taxon>Pseudomonadota</taxon>
        <taxon>Gammaproteobacteria</taxon>
        <taxon>Enterobacterales</taxon>
        <taxon>Hafniaceae</taxon>
        <taxon>Edwardsiella</taxon>
    </lineage>
</organism>
<comment type="catalytic activity">
    <reaction evidence="1">
        <text>D-arabinose 5-phosphate + phosphoenolpyruvate + H2O = 3-deoxy-alpha-D-manno-2-octulosonate-8-phosphate + phosphate</text>
        <dbReference type="Rhea" id="RHEA:14053"/>
        <dbReference type="ChEBI" id="CHEBI:15377"/>
        <dbReference type="ChEBI" id="CHEBI:43474"/>
        <dbReference type="ChEBI" id="CHEBI:57693"/>
        <dbReference type="ChEBI" id="CHEBI:58702"/>
        <dbReference type="ChEBI" id="CHEBI:85985"/>
        <dbReference type="EC" id="2.5.1.55"/>
    </reaction>
</comment>
<comment type="pathway">
    <text evidence="1">Carbohydrate biosynthesis; 3-deoxy-D-manno-octulosonate biosynthesis; 3-deoxy-D-manno-octulosonate from D-ribulose 5-phosphate: step 2/3.</text>
</comment>
<comment type="pathway">
    <text evidence="1">Bacterial outer membrane biogenesis; lipopolysaccharide biosynthesis.</text>
</comment>
<comment type="subcellular location">
    <subcellularLocation>
        <location evidence="1">Cytoplasm</location>
    </subcellularLocation>
</comment>
<comment type="similarity">
    <text evidence="1">Belongs to the KdsA family.</text>
</comment>
<keyword id="KW-0963">Cytoplasm</keyword>
<keyword id="KW-0448">Lipopolysaccharide biosynthesis</keyword>
<keyword id="KW-0808">Transferase</keyword>
<evidence type="ECO:0000255" key="1">
    <source>
        <dbReference type="HAMAP-Rule" id="MF_00056"/>
    </source>
</evidence>
<reference key="1">
    <citation type="submission" date="2009-03" db="EMBL/GenBank/DDBJ databases">
        <title>Complete genome sequence of Edwardsiella ictaluri 93-146.</title>
        <authorList>
            <person name="Williams M.L."/>
            <person name="Gillaspy A.F."/>
            <person name="Dyer D.W."/>
            <person name="Thune R.L."/>
            <person name="Waldbieser G.C."/>
            <person name="Schuster S.C."/>
            <person name="Gipson J."/>
            <person name="Zaitshik J."/>
            <person name="Landry C."/>
            <person name="Lawrence M.L."/>
        </authorList>
    </citation>
    <scope>NUCLEOTIDE SEQUENCE [LARGE SCALE GENOMIC DNA]</scope>
    <source>
        <strain>93-146</strain>
    </source>
</reference>
<gene>
    <name evidence="1" type="primary">kdsA</name>
    <name type="ordered locus">NT01EI_1567</name>
</gene>
<sequence length="284" mass="30938">MKQKVVSIGDIQVANDLPFVLFGGMNVLESRDLAMRICEHYVTVTQKLGIPYVFKASFDKANRSSIHSYRGPGLEEGMKIFQELKRTFGVKIITDVHTPEQAQPVADVVDIIQLPAFLARQTDLVEAMAKTGAVINVKKPQFLSPGQMGNIVDKFREGGNDRVILCDRGSNFGYDNLVVDMLGFGVMKSVSHGAPVIFDVTHSLQCRDPFGAASGGRRAQVTELARSGMAIGLAGLFIEAHPDPVHAMCDGPSALPLEKLEPFLVQMKAIDDLVKNFPPLDTAN</sequence>